<feature type="chain" id="PRO_1000142111" description="Large ribosomal subunit protein uL4">
    <location>
        <begin position="1"/>
        <end position="211"/>
    </location>
</feature>
<feature type="region of interest" description="Disordered" evidence="2">
    <location>
        <begin position="41"/>
        <end position="78"/>
    </location>
</feature>
<feature type="compositionally biased region" description="Polar residues" evidence="2">
    <location>
        <begin position="41"/>
        <end position="52"/>
    </location>
</feature>
<feature type="compositionally biased region" description="Basic residues" evidence="2">
    <location>
        <begin position="60"/>
        <end position="71"/>
    </location>
</feature>
<keyword id="KW-1185">Reference proteome</keyword>
<keyword id="KW-0687">Ribonucleoprotein</keyword>
<keyword id="KW-0689">Ribosomal protein</keyword>
<keyword id="KW-0694">RNA-binding</keyword>
<keyword id="KW-0699">rRNA-binding</keyword>
<proteinExistence type="inferred from homology"/>
<gene>
    <name evidence="1" type="primary">rplD</name>
    <name evidence="1" type="synonym">rpl4</name>
    <name type="ordered locus">PCC8801_0251</name>
</gene>
<reference key="1">
    <citation type="journal article" date="2011" name="MBio">
        <title>Novel metabolic attributes of the genus Cyanothece, comprising a group of unicellular nitrogen-fixing Cyanobacteria.</title>
        <authorList>
            <person name="Bandyopadhyay A."/>
            <person name="Elvitigala T."/>
            <person name="Welsh E."/>
            <person name="Stockel J."/>
            <person name="Liberton M."/>
            <person name="Min H."/>
            <person name="Sherman L.A."/>
            <person name="Pakrasi H.B."/>
        </authorList>
    </citation>
    <scope>NUCLEOTIDE SEQUENCE [LARGE SCALE GENOMIC DNA]</scope>
    <source>
        <strain>PCC 8801 / RF-1</strain>
    </source>
</reference>
<name>RL4_RIPO1</name>
<comment type="function">
    <text evidence="1">One of the primary rRNA binding proteins, this protein initially binds near the 5'-end of the 23S rRNA. It is important during the early stages of 50S assembly. It makes multiple contacts with different domains of the 23S rRNA in the assembled 50S subunit and ribosome.</text>
</comment>
<comment type="function">
    <text evidence="1">Forms part of the polypeptide exit tunnel.</text>
</comment>
<comment type="subunit">
    <text evidence="1">Part of the 50S ribosomal subunit.</text>
</comment>
<comment type="similarity">
    <text evidence="1">Belongs to the universal ribosomal protein uL4 family.</text>
</comment>
<organism>
    <name type="scientific">Rippkaea orientalis (strain PCC 8801 / RF-1)</name>
    <name type="common">Cyanothece sp. (strain PCC 8801)</name>
    <dbReference type="NCBI Taxonomy" id="41431"/>
    <lineage>
        <taxon>Bacteria</taxon>
        <taxon>Bacillati</taxon>
        <taxon>Cyanobacteriota</taxon>
        <taxon>Cyanophyceae</taxon>
        <taxon>Oscillatoriophycideae</taxon>
        <taxon>Chroococcales</taxon>
        <taxon>Aphanothecaceae</taxon>
        <taxon>Rippkaea</taxon>
        <taxon>Rippkaea orientalis</taxon>
    </lineage>
</organism>
<dbReference type="EMBL" id="CP001287">
    <property type="protein sequence ID" value="ACK64354.1"/>
    <property type="molecule type" value="Genomic_DNA"/>
</dbReference>
<dbReference type="RefSeq" id="WP_012593631.1">
    <property type="nucleotide sequence ID" value="NC_011726.1"/>
</dbReference>
<dbReference type="SMR" id="B7K334"/>
<dbReference type="STRING" id="41431.PCC8801_0251"/>
<dbReference type="KEGG" id="cyp:PCC8801_0251"/>
<dbReference type="eggNOG" id="COG0088">
    <property type="taxonomic scope" value="Bacteria"/>
</dbReference>
<dbReference type="HOGENOM" id="CLU_041575_5_2_3"/>
<dbReference type="OrthoDB" id="9803201at2"/>
<dbReference type="Proteomes" id="UP000008204">
    <property type="component" value="Chromosome"/>
</dbReference>
<dbReference type="GO" id="GO:1990904">
    <property type="term" value="C:ribonucleoprotein complex"/>
    <property type="evidence" value="ECO:0007669"/>
    <property type="project" value="UniProtKB-KW"/>
</dbReference>
<dbReference type="GO" id="GO:0005840">
    <property type="term" value="C:ribosome"/>
    <property type="evidence" value="ECO:0007669"/>
    <property type="project" value="UniProtKB-KW"/>
</dbReference>
<dbReference type="GO" id="GO:0019843">
    <property type="term" value="F:rRNA binding"/>
    <property type="evidence" value="ECO:0007669"/>
    <property type="project" value="UniProtKB-UniRule"/>
</dbReference>
<dbReference type="GO" id="GO:0003735">
    <property type="term" value="F:structural constituent of ribosome"/>
    <property type="evidence" value="ECO:0007669"/>
    <property type="project" value="InterPro"/>
</dbReference>
<dbReference type="GO" id="GO:0006412">
    <property type="term" value="P:translation"/>
    <property type="evidence" value="ECO:0007669"/>
    <property type="project" value="UniProtKB-UniRule"/>
</dbReference>
<dbReference type="FunFam" id="3.40.1370.10:FF:000012">
    <property type="entry name" value="50S ribosomal protein L4"/>
    <property type="match status" value="1"/>
</dbReference>
<dbReference type="Gene3D" id="3.40.1370.10">
    <property type="match status" value="1"/>
</dbReference>
<dbReference type="HAMAP" id="MF_01328_B">
    <property type="entry name" value="Ribosomal_uL4_B"/>
    <property type="match status" value="1"/>
</dbReference>
<dbReference type="InterPro" id="IPR002136">
    <property type="entry name" value="Ribosomal_uL4"/>
</dbReference>
<dbReference type="InterPro" id="IPR013005">
    <property type="entry name" value="Ribosomal_uL4-like"/>
</dbReference>
<dbReference type="InterPro" id="IPR023574">
    <property type="entry name" value="Ribosomal_uL4_dom_sf"/>
</dbReference>
<dbReference type="NCBIfam" id="TIGR03953">
    <property type="entry name" value="rplD_bact"/>
    <property type="match status" value="1"/>
</dbReference>
<dbReference type="PANTHER" id="PTHR10746">
    <property type="entry name" value="50S RIBOSOMAL PROTEIN L4"/>
    <property type="match status" value="1"/>
</dbReference>
<dbReference type="PANTHER" id="PTHR10746:SF17">
    <property type="entry name" value="LARGE RIBOSOMAL SUBUNIT PROTEIN UL4C"/>
    <property type="match status" value="1"/>
</dbReference>
<dbReference type="Pfam" id="PF00573">
    <property type="entry name" value="Ribosomal_L4"/>
    <property type="match status" value="1"/>
</dbReference>
<dbReference type="SUPFAM" id="SSF52166">
    <property type="entry name" value="Ribosomal protein L4"/>
    <property type="match status" value="1"/>
</dbReference>
<protein>
    <recommendedName>
        <fullName evidence="1">Large ribosomal subunit protein uL4</fullName>
    </recommendedName>
    <alternativeName>
        <fullName evidence="3">50S ribosomal protein L4</fullName>
    </alternativeName>
</protein>
<evidence type="ECO:0000255" key="1">
    <source>
        <dbReference type="HAMAP-Rule" id="MF_01328"/>
    </source>
</evidence>
<evidence type="ECO:0000256" key="2">
    <source>
        <dbReference type="SAM" id="MobiDB-lite"/>
    </source>
</evidence>
<evidence type="ECO:0000305" key="3"/>
<accession>B7K334</accession>
<sequence length="211" mass="23425">MVNCIIKNWQGEEVGQATLELKVAKEENAAHIVHRALVRQQTNARQGTASTKTRAEVRGGGRKPWRQKGTGRARAGSIRSPLWRGGGVTFGPKPKDFNVKMNRKERRLALRTALDSRIEDLIVVENFAEQLTQPKTKELVSALTRWGIDGNQKVVLIVSEITDNIQLSARNVPYIKLLKADGLNVYDLLVADKIVATAEALSKVQEVYSDS</sequence>